<sequence>MHGHRVPGGPGPSDPERSAANTPGAAPLACADSDPGALEPGLPVSRGSGTALGGPLDPQFVGPSDASLGAPPSSRVLPCGPSPQHHRALRFSYHLEGSQPRPGLHQGNRILVKSLSLDPGQSLEPHPEGPQRLRSDPGPPTEIPGPRPSPLKRAPGPKPQVPPKPSYLQMPRVLPPPEPIPPPPSRPLPADPRVAKGLVPRAEASTSSAAVSSLIEKFEREPVIVASDRPAPGPCPVPPEPAMLPQPPPQPTGSQLPEGEASRCLFLLAPGPRDGEKVPNRDSGIDSISSPSNSEETCFVSDDGPPIHSLCPGPPALASMPVALADPHRPGSQEVDSDLEEEEEEEEEEKEREIPVPPMERQESVELTVQQKVFHIANELLQTEKAYVSRLHLLDQVFCARLLEEARNRSSFPADVVHGIFSNICSIYCFHQQFLLPELEKRMEEWDRYPRIGDILQKLAPFLKMYGEYVKNFDRAVELVNTWTERSTQFKVIIHEVQKEEACGNLTLQHHMLEPVQRIPRYELLLKDYLLKLPHGSPDSKDAQKSLELIATAAEHSNAAIRKMERMHKLLKVYELLGGEEDIVSPTKELIKEGHILKLSAKNGTTQDRYLILFNDRLLYCVPRLRLLGQKFSVRARIDVDGMELKESSNLNMPRTFLVSGKQRSLELQARTEEEKKDWVQAINSTLLKHEQTLETFKLLNSTNRDDEDTPPNSPNVDLGKRAPTPIREKEVTMCMRCQEPFNSITKRRHHCKACGHVVCGKCSEFRARLIYDNNRSNRVCTDCYVALHGAPGSSPACSQHTPQRRRSILEKQASVAAENSVICSFLHYMEKGGKGWHKAWFVVPENEPLVLYIYGAPQDVKAQRSLPLIGFEVGPPEAGERPDRRHVFKITQSHLSWYFSPETEELQRRWMAVLGRAGRGDTFCPGPTLSEDKEMEETPVAASGATAEPPEASQTRDKT</sequence>
<protein>
    <recommendedName>
        <fullName>FYVE, RhoGEF and PH domain-containing protein 1</fullName>
    </recommendedName>
    <alternativeName>
        <fullName>Faciogenital dysplasia 1 protein homolog</fullName>
    </alternativeName>
    <alternativeName>
        <fullName>Rho/Rac guanine nucleotide exchange factor FGD1</fullName>
        <shortName>Rho/Rac GEF</shortName>
    </alternativeName>
    <alternativeName>
        <fullName>Zinc finger FYVE domain-containing protein 3</fullName>
    </alternativeName>
</protein>
<proteinExistence type="evidence at protein level"/>
<keyword id="KW-0966">Cell projection</keyword>
<keyword id="KW-0963">Cytoplasm</keyword>
<keyword id="KW-0206">Cytoskeleton</keyword>
<keyword id="KW-0344">Guanine-nucleotide releasing factor</keyword>
<keyword id="KW-0479">Metal-binding</keyword>
<keyword id="KW-0597">Phosphoprotein</keyword>
<keyword id="KW-1185">Reference proteome</keyword>
<keyword id="KW-0677">Repeat</keyword>
<keyword id="KW-0862">Zinc</keyword>
<keyword id="KW-0863">Zinc-finger</keyword>
<dbReference type="EMBL" id="U22325">
    <property type="protein sequence ID" value="AAA96001.1"/>
    <property type="molecule type" value="mRNA"/>
</dbReference>
<dbReference type="EMBL" id="AL805937">
    <property type="status" value="NOT_ANNOTATED_CDS"/>
    <property type="molecule type" value="Genomic_DNA"/>
</dbReference>
<dbReference type="EMBL" id="BC011462">
    <property type="protein sequence ID" value="AAH11462.1"/>
    <property type="molecule type" value="mRNA"/>
</dbReference>
<dbReference type="CCDS" id="CCDS30467.1"/>
<dbReference type="RefSeq" id="NP_032027.2">
    <property type="nucleotide sequence ID" value="NM_008001.4"/>
</dbReference>
<dbReference type="SMR" id="P52734"/>
<dbReference type="BioGRID" id="199637">
    <property type="interactions" value="2"/>
</dbReference>
<dbReference type="FunCoup" id="P52734">
    <property type="interactions" value="241"/>
</dbReference>
<dbReference type="IntAct" id="P52734">
    <property type="interactions" value="2"/>
</dbReference>
<dbReference type="MINT" id="P52734"/>
<dbReference type="STRING" id="10090.ENSMUSP00000026296"/>
<dbReference type="GlyGen" id="P52734">
    <property type="glycosylation" value="1 site"/>
</dbReference>
<dbReference type="iPTMnet" id="P52734"/>
<dbReference type="PhosphoSitePlus" id="P52734"/>
<dbReference type="jPOST" id="P52734"/>
<dbReference type="PaxDb" id="10090-ENSMUSP00000026296"/>
<dbReference type="ProteomicsDB" id="271562"/>
<dbReference type="Pumba" id="P52734"/>
<dbReference type="Antibodypedia" id="376">
    <property type="antibodies" value="61 antibodies from 21 providers"/>
</dbReference>
<dbReference type="DNASU" id="14163"/>
<dbReference type="Ensembl" id="ENSMUST00000026296.8">
    <property type="protein sequence ID" value="ENSMUSP00000026296.8"/>
    <property type="gene ID" value="ENSMUSG00000025265.15"/>
</dbReference>
<dbReference type="GeneID" id="14163"/>
<dbReference type="KEGG" id="mmu:14163"/>
<dbReference type="UCSC" id="uc009uow.2">
    <property type="organism name" value="mouse"/>
</dbReference>
<dbReference type="AGR" id="MGI:104566"/>
<dbReference type="CTD" id="2245"/>
<dbReference type="MGI" id="MGI:104566">
    <property type="gene designation" value="Fgd1"/>
</dbReference>
<dbReference type="VEuPathDB" id="HostDB:ENSMUSG00000025265"/>
<dbReference type="eggNOG" id="KOG4424">
    <property type="taxonomic scope" value="Eukaryota"/>
</dbReference>
<dbReference type="GeneTree" id="ENSGT00940000159438"/>
<dbReference type="InParanoid" id="P52734"/>
<dbReference type="OMA" id="QQRWMAV"/>
<dbReference type="OrthoDB" id="660555at2759"/>
<dbReference type="PhylomeDB" id="P52734"/>
<dbReference type="TreeFam" id="TF316247"/>
<dbReference type="Reactome" id="R-MMU-193648">
    <property type="pathway name" value="NRAGE signals death through JNK"/>
</dbReference>
<dbReference type="Reactome" id="R-MMU-416482">
    <property type="pathway name" value="G alpha (12/13) signalling events"/>
</dbReference>
<dbReference type="Reactome" id="R-MMU-9013148">
    <property type="pathway name" value="CDC42 GTPase cycle"/>
</dbReference>
<dbReference type="BioGRID-ORCS" id="14163">
    <property type="hits" value="6 hits in 75 CRISPR screens"/>
</dbReference>
<dbReference type="ChiTaRS" id="Fgd1">
    <property type="organism name" value="mouse"/>
</dbReference>
<dbReference type="PRO" id="PR:P52734"/>
<dbReference type="Proteomes" id="UP000000589">
    <property type="component" value="Chromosome X"/>
</dbReference>
<dbReference type="RNAct" id="P52734">
    <property type="molecule type" value="protein"/>
</dbReference>
<dbReference type="Bgee" id="ENSMUSG00000025265">
    <property type="expression patterns" value="Expressed in rostral migratory stream and 240 other cell types or tissues"/>
</dbReference>
<dbReference type="ExpressionAtlas" id="P52734">
    <property type="expression patterns" value="baseline and differential"/>
</dbReference>
<dbReference type="GO" id="GO:0005737">
    <property type="term" value="C:cytoplasm"/>
    <property type="evidence" value="ECO:0000314"/>
    <property type="project" value="MGI"/>
</dbReference>
<dbReference type="GO" id="GO:0005856">
    <property type="term" value="C:cytoskeleton"/>
    <property type="evidence" value="ECO:0007669"/>
    <property type="project" value="UniProtKB-SubCell"/>
</dbReference>
<dbReference type="GO" id="GO:0005829">
    <property type="term" value="C:cytosol"/>
    <property type="evidence" value="ECO:0007669"/>
    <property type="project" value="Ensembl"/>
</dbReference>
<dbReference type="GO" id="GO:0005794">
    <property type="term" value="C:Golgi apparatus"/>
    <property type="evidence" value="ECO:0000314"/>
    <property type="project" value="MGI"/>
</dbReference>
<dbReference type="GO" id="GO:0030027">
    <property type="term" value="C:lamellipodium"/>
    <property type="evidence" value="ECO:0000314"/>
    <property type="project" value="MGI"/>
</dbReference>
<dbReference type="GO" id="GO:0005886">
    <property type="term" value="C:plasma membrane"/>
    <property type="evidence" value="ECO:0007669"/>
    <property type="project" value="Ensembl"/>
</dbReference>
<dbReference type="GO" id="GO:0001726">
    <property type="term" value="C:ruffle"/>
    <property type="evidence" value="ECO:0000314"/>
    <property type="project" value="MGI"/>
</dbReference>
<dbReference type="GO" id="GO:0005085">
    <property type="term" value="F:guanyl-nucleotide exchange factor activity"/>
    <property type="evidence" value="ECO:0007669"/>
    <property type="project" value="UniProtKB-KW"/>
</dbReference>
<dbReference type="GO" id="GO:0031267">
    <property type="term" value="F:small GTPase binding"/>
    <property type="evidence" value="ECO:0007669"/>
    <property type="project" value="Ensembl"/>
</dbReference>
<dbReference type="GO" id="GO:0008270">
    <property type="term" value="F:zinc ion binding"/>
    <property type="evidence" value="ECO:0007669"/>
    <property type="project" value="UniProtKB-KW"/>
</dbReference>
<dbReference type="GO" id="GO:0030036">
    <property type="term" value="P:actin cytoskeleton organization"/>
    <property type="evidence" value="ECO:0007669"/>
    <property type="project" value="Ensembl"/>
</dbReference>
<dbReference type="GO" id="GO:0007010">
    <property type="term" value="P:cytoskeleton organization"/>
    <property type="evidence" value="ECO:0000314"/>
    <property type="project" value="MGI"/>
</dbReference>
<dbReference type="GO" id="GO:0046847">
    <property type="term" value="P:filopodium assembly"/>
    <property type="evidence" value="ECO:0007669"/>
    <property type="project" value="Ensembl"/>
</dbReference>
<dbReference type="GO" id="GO:0008360">
    <property type="term" value="P:regulation of cell shape"/>
    <property type="evidence" value="ECO:0000314"/>
    <property type="project" value="UniProtKB"/>
</dbReference>
<dbReference type="CDD" id="cd15741">
    <property type="entry name" value="FYVE_FGD1_2_4"/>
    <property type="match status" value="1"/>
</dbReference>
<dbReference type="CDD" id="cd01219">
    <property type="entry name" value="PH1_FGD1"/>
    <property type="match status" value="1"/>
</dbReference>
<dbReference type="CDD" id="cd13236">
    <property type="entry name" value="PH2_FGD1-4"/>
    <property type="match status" value="1"/>
</dbReference>
<dbReference type="CDD" id="cd00160">
    <property type="entry name" value="RhoGEF"/>
    <property type="match status" value="1"/>
</dbReference>
<dbReference type="FunFam" id="3.30.40.10:FF:000061">
    <property type="entry name" value="FYVE, RhoGEF and PH domain containing 1"/>
    <property type="match status" value="1"/>
</dbReference>
<dbReference type="FunFam" id="2.30.29.30:FF:000279">
    <property type="entry name" value="FYVE, RhoGEF and PH domain-containing protein 1"/>
    <property type="match status" value="1"/>
</dbReference>
<dbReference type="FunFam" id="1.20.900.10:FF:000013">
    <property type="entry name" value="FYVE, RhoGEF and PH domain-containing protein 4"/>
    <property type="match status" value="1"/>
</dbReference>
<dbReference type="FunFam" id="2.30.29.30:FF:000102">
    <property type="entry name" value="FYVE, RhoGEF and PH domain-containing protein 4"/>
    <property type="match status" value="1"/>
</dbReference>
<dbReference type="Gene3D" id="1.20.900.10">
    <property type="entry name" value="Dbl homology (DH) domain"/>
    <property type="match status" value="1"/>
</dbReference>
<dbReference type="Gene3D" id="2.30.29.30">
    <property type="entry name" value="Pleckstrin-homology domain (PH domain)/Phosphotyrosine-binding domain (PTB)"/>
    <property type="match status" value="2"/>
</dbReference>
<dbReference type="Gene3D" id="3.30.40.10">
    <property type="entry name" value="Zinc/RING finger domain, C3HC4 (zinc finger)"/>
    <property type="match status" value="1"/>
</dbReference>
<dbReference type="InterPro" id="IPR035899">
    <property type="entry name" value="DBL_dom_sf"/>
</dbReference>
<dbReference type="InterPro" id="IPR000219">
    <property type="entry name" value="DH_dom"/>
</dbReference>
<dbReference type="InterPro" id="IPR035941">
    <property type="entry name" value="FGD1-4_PH2"/>
</dbReference>
<dbReference type="InterPro" id="IPR035939">
    <property type="entry name" value="FGD1_PH1"/>
</dbReference>
<dbReference type="InterPro" id="IPR051092">
    <property type="entry name" value="FYVE_RhoGEF_PH"/>
</dbReference>
<dbReference type="InterPro" id="IPR011993">
    <property type="entry name" value="PH-like_dom_sf"/>
</dbReference>
<dbReference type="InterPro" id="IPR001849">
    <property type="entry name" value="PH_domain"/>
</dbReference>
<dbReference type="InterPro" id="IPR000306">
    <property type="entry name" value="Znf_FYVE"/>
</dbReference>
<dbReference type="InterPro" id="IPR017455">
    <property type="entry name" value="Znf_FYVE-rel"/>
</dbReference>
<dbReference type="InterPro" id="IPR013083">
    <property type="entry name" value="Znf_RING/FYVE/PHD"/>
</dbReference>
<dbReference type="PANTHER" id="PTHR12673">
    <property type="entry name" value="FACIOGENITAL DYSPLASIA PROTEIN"/>
    <property type="match status" value="1"/>
</dbReference>
<dbReference type="PANTHER" id="PTHR12673:SF79">
    <property type="entry name" value="FYVE, RHOGEF AND PH DOMAIN-CONTAINING PROTEIN 1"/>
    <property type="match status" value="1"/>
</dbReference>
<dbReference type="Pfam" id="PF01363">
    <property type="entry name" value="FYVE"/>
    <property type="match status" value="1"/>
</dbReference>
<dbReference type="Pfam" id="PF00169">
    <property type="entry name" value="PH"/>
    <property type="match status" value="2"/>
</dbReference>
<dbReference type="Pfam" id="PF00621">
    <property type="entry name" value="RhoGEF"/>
    <property type="match status" value="1"/>
</dbReference>
<dbReference type="SMART" id="SM00064">
    <property type="entry name" value="FYVE"/>
    <property type="match status" value="1"/>
</dbReference>
<dbReference type="SMART" id="SM00233">
    <property type="entry name" value="PH"/>
    <property type="match status" value="2"/>
</dbReference>
<dbReference type="SMART" id="SM00325">
    <property type="entry name" value="RhoGEF"/>
    <property type="match status" value="1"/>
</dbReference>
<dbReference type="SUPFAM" id="SSF48065">
    <property type="entry name" value="DBL homology domain (DH-domain)"/>
    <property type="match status" value="1"/>
</dbReference>
<dbReference type="SUPFAM" id="SSF50729">
    <property type="entry name" value="PH domain-like"/>
    <property type="match status" value="2"/>
</dbReference>
<dbReference type="PROSITE" id="PS50010">
    <property type="entry name" value="DH_2"/>
    <property type="match status" value="1"/>
</dbReference>
<dbReference type="PROSITE" id="PS50003">
    <property type="entry name" value="PH_DOMAIN"/>
    <property type="match status" value="2"/>
</dbReference>
<dbReference type="PROSITE" id="PS50178">
    <property type="entry name" value="ZF_FYVE"/>
    <property type="match status" value="1"/>
</dbReference>
<name>FGD1_MOUSE</name>
<comment type="function">
    <text evidence="8">Activates CDC42, a member of the Ras-like family of Rho- and Rac proteins, by exchanging bound GDP for free GTP. Plays a role in regulating the actin cytoskeleton and cell shape.</text>
</comment>
<comment type="subunit">
    <text evidence="1 8">Interacts with DBNL/ABP1 and CTTN. Binds CDC42 (By similarity). May interact with CCPG1.</text>
</comment>
<comment type="subcellular location">
    <subcellularLocation>
        <location evidence="8">Cytoplasm</location>
    </subcellularLocation>
    <subcellularLocation>
        <location evidence="8">Cell projection</location>
        <location evidence="8">Lamellipodium</location>
    </subcellularLocation>
    <subcellularLocation>
        <location evidence="8">Cell projection</location>
        <location evidence="8">Ruffle</location>
    </subcellularLocation>
    <subcellularLocation>
        <location evidence="8">Cytoplasm</location>
        <location evidence="8">Cytoskeleton</location>
    </subcellularLocation>
    <text>Associated with membrane ruffles and lamellipodia.</text>
</comment>
<comment type="domain">
    <text>The DH domain is involved in interaction with CCPG1.</text>
</comment>
<evidence type="ECO:0000250" key="1"/>
<evidence type="ECO:0000250" key="2">
    <source>
        <dbReference type="UniProtKB" id="P98174"/>
    </source>
</evidence>
<evidence type="ECO:0000255" key="3"/>
<evidence type="ECO:0000255" key="4">
    <source>
        <dbReference type="PROSITE-ProRule" id="PRU00062"/>
    </source>
</evidence>
<evidence type="ECO:0000255" key="5">
    <source>
        <dbReference type="PROSITE-ProRule" id="PRU00091"/>
    </source>
</evidence>
<evidence type="ECO:0000255" key="6">
    <source>
        <dbReference type="PROSITE-ProRule" id="PRU00145"/>
    </source>
</evidence>
<evidence type="ECO:0000256" key="7">
    <source>
        <dbReference type="SAM" id="MobiDB-lite"/>
    </source>
</evidence>
<evidence type="ECO:0000269" key="8">
    <source>
    </source>
</evidence>
<evidence type="ECO:0000305" key="9"/>
<evidence type="ECO:0007744" key="10">
    <source>
    </source>
</evidence>
<accession>P52734</accession>
<accession>Q921L2</accession>
<gene>
    <name type="primary">Fgd1</name>
</gene>
<organism>
    <name type="scientific">Mus musculus</name>
    <name type="common">Mouse</name>
    <dbReference type="NCBI Taxonomy" id="10090"/>
    <lineage>
        <taxon>Eukaryota</taxon>
        <taxon>Metazoa</taxon>
        <taxon>Chordata</taxon>
        <taxon>Craniata</taxon>
        <taxon>Vertebrata</taxon>
        <taxon>Euteleostomi</taxon>
        <taxon>Mammalia</taxon>
        <taxon>Eutheria</taxon>
        <taxon>Euarchontoglires</taxon>
        <taxon>Glires</taxon>
        <taxon>Rodentia</taxon>
        <taxon>Myomorpha</taxon>
        <taxon>Muroidea</taxon>
        <taxon>Muridae</taxon>
        <taxon>Murinae</taxon>
        <taxon>Mus</taxon>
        <taxon>Mus</taxon>
    </lineage>
</organism>
<feature type="chain" id="PRO_0000080941" description="FYVE, RhoGEF and PH domain-containing protein 1">
    <location>
        <begin position="1"/>
        <end position="960"/>
    </location>
</feature>
<feature type="domain" description="DH" evidence="4">
    <location>
        <begin position="372"/>
        <end position="560"/>
    </location>
</feature>
<feature type="domain" description="PH 1" evidence="6">
    <location>
        <begin position="589"/>
        <end position="688"/>
    </location>
</feature>
<feature type="domain" description="PH 2" evidence="6">
    <location>
        <begin position="820"/>
        <end position="920"/>
    </location>
</feature>
<feature type="zinc finger region" description="FYVE-type" evidence="5">
    <location>
        <begin position="729"/>
        <end position="789"/>
    </location>
</feature>
<feature type="region of interest" description="Disordered" evidence="7">
    <location>
        <begin position="1"/>
        <end position="210"/>
    </location>
</feature>
<feature type="region of interest" description="Disordered" evidence="7">
    <location>
        <begin position="226"/>
        <end position="355"/>
    </location>
</feature>
<feature type="region of interest" description="Disordered" evidence="7">
    <location>
        <begin position="701"/>
        <end position="725"/>
    </location>
</feature>
<feature type="region of interest" description="Disordered" evidence="7">
    <location>
        <begin position="922"/>
        <end position="960"/>
    </location>
</feature>
<feature type="short sequence motif" description="SH3-binding" evidence="3">
    <location>
        <begin position="171"/>
        <end position="187"/>
    </location>
</feature>
<feature type="compositionally biased region" description="Basic and acidic residues" evidence="7">
    <location>
        <begin position="125"/>
        <end position="135"/>
    </location>
</feature>
<feature type="compositionally biased region" description="Pro residues" evidence="7">
    <location>
        <begin position="137"/>
        <end position="149"/>
    </location>
</feature>
<feature type="compositionally biased region" description="Pro residues" evidence="7">
    <location>
        <begin position="156"/>
        <end position="165"/>
    </location>
</feature>
<feature type="compositionally biased region" description="Pro residues" evidence="7">
    <location>
        <begin position="173"/>
        <end position="190"/>
    </location>
</feature>
<feature type="compositionally biased region" description="Pro residues" evidence="7">
    <location>
        <begin position="231"/>
        <end position="251"/>
    </location>
</feature>
<feature type="compositionally biased region" description="Basic and acidic residues" evidence="7">
    <location>
        <begin position="273"/>
        <end position="284"/>
    </location>
</feature>
<feature type="compositionally biased region" description="Low complexity" evidence="7">
    <location>
        <begin position="285"/>
        <end position="294"/>
    </location>
</feature>
<feature type="compositionally biased region" description="Acidic residues" evidence="7">
    <location>
        <begin position="335"/>
        <end position="350"/>
    </location>
</feature>
<feature type="binding site" evidence="5">
    <location>
        <position position="735"/>
    </location>
    <ligand>
        <name>Zn(2+)</name>
        <dbReference type="ChEBI" id="CHEBI:29105"/>
        <label>1</label>
    </ligand>
</feature>
<feature type="binding site" evidence="5">
    <location>
        <position position="738"/>
    </location>
    <ligand>
        <name>Zn(2+)</name>
        <dbReference type="ChEBI" id="CHEBI:29105"/>
        <label>1</label>
    </ligand>
</feature>
<feature type="binding site" evidence="5">
    <location>
        <position position="752"/>
    </location>
    <ligand>
        <name>Zn(2+)</name>
        <dbReference type="ChEBI" id="CHEBI:29105"/>
        <label>2</label>
    </ligand>
</feature>
<feature type="binding site" evidence="5">
    <location>
        <position position="755"/>
    </location>
    <ligand>
        <name>Zn(2+)</name>
        <dbReference type="ChEBI" id="CHEBI:29105"/>
        <label>2</label>
    </ligand>
</feature>
<feature type="binding site" evidence="5">
    <location>
        <position position="760"/>
    </location>
    <ligand>
        <name>Zn(2+)</name>
        <dbReference type="ChEBI" id="CHEBI:29105"/>
        <label>1</label>
    </ligand>
</feature>
<feature type="binding site" evidence="5">
    <location>
        <position position="763"/>
    </location>
    <ligand>
        <name>Zn(2+)</name>
        <dbReference type="ChEBI" id="CHEBI:29105"/>
        <label>1</label>
    </ligand>
</feature>
<feature type="binding site" evidence="5">
    <location>
        <position position="781"/>
    </location>
    <ligand>
        <name>Zn(2+)</name>
        <dbReference type="ChEBI" id="CHEBI:29105"/>
        <label>2</label>
    </ligand>
</feature>
<feature type="binding site" evidence="5">
    <location>
        <position position="784"/>
    </location>
    <ligand>
        <name>Zn(2+)</name>
        <dbReference type="ChEBI" id="CHEBI:29105"/>
        <label>2</label>
    </ligand>
</feature>
<feature type="modified residue" description="Phosphoserine" evidence="2">
    <location>
        <position position="48"/>
    </location>
</feature>
<feature type="modified residue" description="Phosphoserine" evidence="2">
    <location>
        <position position="205"/>
    </location>
</feature>
<feature type="modified residue" description="Phosphothreonine" evidence="10">
    <location>
        <position position="710"/>
    </location>
</feature>
<feature type="modified residue" description="Phosphoserine" evidence="10">
    <location>
        <position position="714"/>
    </location>
</feature>
<feature type="mutagenesis site" description="Abolishes binding to DBNL." evidence="8">
    <original>P</original>
    <variation>A</variation>
    <location>
        <position position="159"/>
    </location>
</feature>
<feature type="mutagenesis site" description="Abolishes binding to DBNL." evidence="8">
    <original>P</original>
    <variation>A</variation>
    <location>
        <position position="162"/>
    </location>
</feature>
<feature type="mutagenesis site" description="No effect on binding to DBNL." evidence="8">
    <original>K</original>
    <variation>E</variation>
    <location>
        <position position="164"/>
    </location>
</feature>
<feature type="sequence conflict" description="In Ref. 1; AAA96001." evidence="9" ref="1">
    <original>G</original>
    <variation>R</variation>
    <location>
        <position position="504"/>
    </location>
</feature>
<feature type="sequence conflict" description="In Ref. 1; AAA96001." evidence="9" ref="1">
    <original>S</original>
    <variation>T</variation>
    <location>
        <position position="633"/>
    </location>
</feature>
<reference key="1">
    <citation type="journal article" date="1995" name="Mamm. Genome">
        <title>Cloning and regional localization of the mouse faciogenital dysplasia (Fgd1) gene.</title>
        <authorList>
            <person name="Pasteris N.G."/>
            <person name="de Gouyon B."/>
            <person name="Cadle A.B."/>
            <person name="Campbell K."/>
            <person name="Herman G.E."/>
            <person name="Gorski J.L."/>
        </authorList>
    </citation>
    <scope>NUCLEOTIDE SEQUENCE [MRNA]</scope>
</reference>
<reference key="2">
    <citation type="journal article" date="2009" name="PLoS Biol.">
        <title>Lineage-specific biology revealed by a finished genome assembly of the mouse.</title>
        <authorList>
            <person name="Church D.M."/>
            <person name="Goodstadt L."/>
            <person name="Hillier L.W."/>
            <person name="Zody M.C."/>
            <person name="Goldstein S."/>
            <person name="She X."/>
            <person name="Bult C.J."/>
            <person name="Agarwala R."/>
            <person name="Cherry J.L."/>
            <person name="DiCuccio M."/>
            <person name="Hlavina W."/>
            <person name="Kapustin Y."/>
            <person name="Meric P."/>
            <person name="Maglott D."/>
            <person name="Birtle Z."/>
            <person name="Marques A.C."/>
            <person name="Graves T."/>
            <person name="Zhou S."/>
            <person name="Teague B."/>
            <person name="Potamousis K."/>
            <person name="Churas C."/>
            <person name="Place M."/>
            <person name="Herschleb J."/>
            <person name="Runnheim R."/>
            <person name="Forrest D."/>
            <person name="Amos-Landgraf J."/>
            <person name="Schwartz D.C."/>
            <person name="Cheng Z."/>
            <person name="Lindblad-Toh K."/>
            <person name="Eichler E.E."/>
            <person name="Ponting C.P."/>
        </authorList>
    </citation>
    <scope>NUCLEOTIDE SEQUENCE [LARGE SCALE GENOMIC DNA]</scope>
    <source>
        <strain>C57BL/6J</strain>
    </source>
</reference>
<reference key="3">
    <citation type="journal article" date="2004" name="Genome Res.">
        <title>The status, quality, and expansion of the NIH full-length cDNA project: the Mammalian Gene Collection (MGC).</title>
        <authorList>
            <consortium name="The MGC Project Team"/>
        </authorList>
    </citation>
    <scope>NUCLEOTIDE SEQUENCE [LARGE SCALE MRNA]</scope>
    <source>
        <strain>FVB/N</strain>
        <tissue>Mammary tumor</tissue>
    </source>
</reference>
<reference key="4">
    <citation type="journal article" date="2003" name="Hum. Mol. Genet.">
        <title>Fgd1, the Cdc42 GEF responsible for faciogenital dysplasia, directly interacts with cortactin and mAbp1 to modulate cell shape.</title>
        <authorList>
            <person name="Hou P."/>
            <person name="Estrada L."/>
            <person name="Kinley A.W."/>
            <person name="Parsons J.T."/>
            <person name="Vojtek A.B."/>
            <person name="Gorski J.L."/>
        </authorList>
    </citation>
    <scope>FUNCTION</scope>
    <scope>SUBCELLULAR LOCATION</scope>
    <scope>INTERACTION WITH DBNL AND CTTN</scope>
    <scope>MUTAGENESIS OF PRO-159; PRO-162 AND LYS-164</scope>
</reference>
<reference key="5">
    <citation type="journal article" date="2006" name="Mol. Cell. Biol.">
        <title>Ccpg1, a novel scaffold protein that regulates the activity of the Rho guanine nucleotide exchange factor Dbs.</title>
        <authorList>
            <person name="Kostenko E.V."/>
            <person name="Olabisi O.O."/>
            <person name="Sahay S."/>
            <person name="Rodriguez P.L."/>
            <person name="Whitehead I.P."/>
        </authorList>
    </citation>
    <scope>POSSIBLE INTERACTION WITH CCPG1</scope>
</reference>
<reference key="6">
    <citation type="journal article" date="2010" name="Cell">
        <title>A tissue-specific atlas of mouse protein phosphorylation and expression.</title>
        <authorList>
            <person name="Huttlin E.L."/>
            <person name="Jedrychowski M.P."/>
            <person name="Elias J.E."/>
            <person name="Goswami T."/>
            <person name="Rad R."/>
            <person name="Beausoleil S.A."/>
            <person name="Villen J."/>
            <person name="Haas W."/>
            <person name="Sowa M.E."/>
            <person name="Gygi S.P."/>
        </authorList>
    </citation>
    <scope>PHOSPHORYLATION [LARGE SCALE ANALYSIS] AT THR-710 AND SER-714</scope>
    <scope>IDENTIFICATION BY MASS SPECTROMETRY [LARGE SCALE ANALYSIS]</scope>
    <source>
        <tissue>Brain</tissue>
        <tissue>Heart</tissue>
    </source>
</reference>